<name>NHP6_CRYNJ</name>
<gene>
    <name type="primary">NHP6</name>
    <name type="ordered locus">CNF04730</name>
</gene>
<protein>
    <recommendedName>
        <fullName>Non-histone chromosomal protein 6</fullName>
    </recommendedName>
</protein>
<accession>P0CO24</accession>
<accession>Q55RH4</accession>
<accession>Q5KEP6</accession>
<comment type="function">
    <text evidence="1">DNA-binding protein that induces severe bending of DNA. Required for DNA-binding by the FACT complex, a general chromatin factor that acts to reorganize nucleosomes. The FACT complex is involved in multiple processes that require DNA as a template such as mRNA elongation, DNA replication and DNA repair. Also augments the fidelity of transcription by RNA polymerase III independently of any role in the FACT complex (By similarity).</text>
</comment>
<comment type="subunit">
    <text evidence="1">Weakly associates with the stable SPT16-POB3 heterodimer to form the FACT complex.</text>
</comment>
<comment type="subcellular location">
    <subcellularLocation>
        <location evidence="2">Nucleus</location>
    </subcellularLocation>
    <subcellularLocation>
        <location evidence="1">Chromosome</location>
    </subcellularLocation>
</comment>
<comment type="similarity">
    <text evidence="4">Belongs to the NHP6 family.</text>
</comment>
<evidence type="ECO:0000250" key="1"/>
<evidence type="ECO:0000255" key="2">
    <source>
        <dbReference type="PROSITE-ProRule" id="PRU00267"/>
    </source>
</evidence>
<evidence type="ECO:0000256" key="3">
    <source>
        <dbReference type="SAM" id="MobiDB-lite"/>
    </source>
</evidence>
<evidence type="ECO:0000305" key="4"/>
<organism>
    <name type="scientific">Cryptococcus neoformans var. neoformans serotype D (strain JEC21 / ATCC MYA-565)</name>
    <name type="common">Filobasidiella neoformans</name>
    <dbReference type="NCBI Taxonomy" id="214684"/>
    <lineage>
        <taxon>Eukaryota</taxon>
        <taxon>Fungi</taxon>
        <taxon>Dikarya</taxon>
        <taxon>Basidiomycota</taxon>
        <taxon>Agaricomycotina</taxon>
        <taxon>Tremellomycetes</taxon>
        <taxon>Tremellales</taxon>
        <taxon>Cryptococcaceae</taxon>
        <taxon>Cryptococcus</taxon>
        <taxon>Cryptococcus neoformans species complex</taxon>
    </lineage>
</organism>
<reference key="1">
    <citation type="journal article" date="2005" name="Science">
        <title>The genome of the basidiomycetous yeast and human pathogen Cryptococcus neoformans.</title>
        <authorList>
            <person name="Loftus B.J."/>
            <person name="Fung E."/>
            <person name="Roncaglia P."/>
            <person name="Rowley D."/>
            <person name="Amedeo P."/>
            <person name="Bruno D."/>
            <person name="Vamathevan J."/>
            <person name="Miranda M."/>
            <person name="Anderson I.J."/>
            <person name="Fraser J.A."/>
            <person name="Allen J.E."/>
            <person name="Bosdet I.E."/>
            <person name="Brent M.R."/>
            <person name="Chiu R."/>
            <person name="Doering T.L."/>
            <person name="Donlin M.J."/>
            <person name="D'Souza C.A."/>
            <person name="Fox D.S."/>
            <person name="Grinberg V."/>
            <person name="Fu J."/>
            <person name="Fukushima M."/>
            <person name="Haas B.J."/>
            <person name="Huang J.C."/>
            <person name="Janbon G."/>
            <person name="Jones S.J.M."/>
            <person name="Koo H.L."/>
            <person name="Krzywinski M.I."/>
            <person name="Kwon-Chung K.J."/>
            <person name="Lengeler K.B."/>
            <person name="Maiti R."/>
            <person name="Marra M.A."/>
            <person name="Marra R.E."/>
            <person name="Mathewson C.A."/>
            <person name="Mitchell T.G."/>
            <person name="Pertea M."/>
            <person name="Riggs F.R."/>
            <person name="Salzberg S.L."/>
            <person name="Schein J.E."/>
            <person name="Shvartsbeyn A."/>
            <person name="Shin H."/>
            <person name="Shumway M."/>
            <person name="Specht C.A."/>
            <person name="Suh B.B."/>
            <person name="Tenney A."/>
            <person name="Utterback T.R."/>
            <person name="Wickes B.L."/>
            <person name="Wortman J.R."/>
            <person name="Wye N.H."/>
            <person name="Kronstad J.W."/>
            <person name="Lodge J.K."/>
            <person name="Heitman J."/>
            <person name="Davis R.W."/>
            <person name="Fraser C.M."/>
            <person name="Hyman R.W."/>
        </authorList>
    </citation>
    <scope>NUCLEOTIDE SEQUENCE [LARGE SCALE GENOMIC DNA]</scope>
    <source>
        <strain>JEC21 / ATCC MYA-565</strain>
    </source>
</reference>
<keyword id="KW-0158">Chromosome</keyword>
<keyword id="KW-0227">DNA damage</keyword>
<keyword id="KW-0234">DNA repair</keyword>
<keyword id="KW-0238">DNA-binding</keyword>
<keyword id="KW-0539">Nucleus</keyword>
<keyword id="KW-1185">Reference proteome</keyword>
<keyword id="KW-0804">Transcription</keyword>
<keyword id="KW-0805">Transcription regulation</keyword>
<proteinExistence type="inferred from homology"/>
<dbReference type="EMBL" id="AE017346">
    <property type="protein sequence ID" value="AAW44308.1"/>
    <property type="molecule type" value="Genomic_DNA"/>
</dbReference>
<dbReference type="RefSeq" id="XP_571615.1">
    <property type="nucleotide sequence ID" value="XM_571615.1"/>
</dbReference>
<dbReference type="SMR" id="P0CO24"/>
<dbReference type="FunCoup" id="P0CO24">
    <property type="interactions" value="256"/>
</dbReference>
<dbReference type="STRING" id="214684.P0CO24"/>
<dbReference type="PaxDb" id="214684-P0CO24"/>
<dbReference type="EnsemblFungi" id="AAW44308">
    <property type="protein sequence ID" value="AAW44308"/>
    <property type="gene ID" value="CNF04730"/>
</dbReference>
<dbReference type="GeneID" id="3258158"/>
<dbReference type="KEGG" id="cne:CNF04730"/>
<dbReference type="VEuPathDB" id="FungiDB:CNF04730"/>
<dbReference type="eggNOG" id="KOG0381">
    <property type="taxonomic scope" value="Eukaryota"/>
</dbReference>
<dbReference type="HOGENOM" id="CLU_082854_10_0_1"/>
<dbReference type="InParanoid" id="P0CO24"/>
<dbReference type="OMA" id="WRERIKN"/>
<dbReference type="OrthoDB" id="1919336at2759"/>
<dbReference type="Proteomes" id="UP000002149">
    <property type="component" value="Chromosome 6"/>
</dbReference>
<dbReference type="GO" id="GO:0005694">
    <property type="term" value="C:chromosome"/>
    <property type="evidence" value="ECO:0007669"/>
    <property type="project" value="UniProtKB-SubCell"/>
</dbReference>
<dbReference type="GO" id="GO:0005634">
    <property type="term" value="C:nucleus"/>
    <property type="evidence" value="ECO:0007669"/>
    <property type="project" value="UniProtKB-SubCell"/>
</dbReference>
<dbReference type="GO" id="GO:0003677">
    <property type="term" value="F:DNA binding"/>
    <property type="evidence" value="ECO:0007669"/>
    <property type="project" value="UniProtKB-KW"/>
</dbReference>
<dbReference type="GO" id="GO:0006281">
    <property type="term" value="P:DNA repair"/>
    <property type="evidence" value="ECO:0007669"/>
    <property type="project" value="UniProtKB-KW"/>
</dbReference>
<dbReference type="CDD" id="cd01390">
    <property type="entry name" value="HMG-box_NHP6-like"/>
    <property type="match status" value="1"/>
</dbReference>
<dbReference type="FunFam" id="1.10.30.10:FF:000016">
    <property type="entry name" value="FACT complex subunit SSRP1"/>
    <property type="match status" value="1"/>
</dbReference>
<dbReference type="Gene3D" id="1.10.30.10">
    <property type="entry name" value="High mobility group box domain"/>
    <property type="match status" value="1"/>
</dbReference>
<dbReference type="InterPro" id="IPR009071">
    <property type="entry name" value="HMG_box_dom"/>
</dbReference>
<dbReference type="InterPro" id="IPR036910">
    <property type="entry name" value="HMG_box_dom_sf"/>
</dbReference>
<dbReference type="InterPro" id="IPR050342">
    <property type="entry name" value="HMGB"/>
</dbReference>
<dbReference type="PANTHER" id="PTHR48112">
    <property type="entry name" value="HIGH MOBILITY GROUP PROTEIN DSP1"/>
    <property type="match status" value="1"/>
</dbReference>
<dbReference type="PANTHER" id="PTHR48112:SF22">
    <property type="entry name" value="MITOCHONDRIAL TRANSCRIPTION FACTOR A, ISOFORM B"/>
    <property type="match status" value="1"/>
</dbReference>
<dbReference type="Pfam" id="PF00505">
    <property type="entry name" value="HMG_box"/>
    <property type="match status" value="1"/>
</dbReference>
<dbReference type="SMART" id="SM00398">
    <property type="entry name" value="HMG"/>
    <property type="match status" value="1"/>
</dbReference>
<dbReference type="SUPFAM" id="SSF47095">
    <property type="entry name" value="HMG-box"/>
    <property type="match status" value="1"/>
</dbReference>
<dbReference type="PROSITE" id="PS50118">
    <property type="entry name" value="HMG_BOX_2"/>
    <property type="match status" value="1"/>
</dbReference>
<feature type="chain" id="PRO_0000245216" description="Non-histone chromosomal protein 6">
    <location>
        <begin position="1"/>
        <end position="116"/>
    </location>
</feature>
<feature type="DNA-binding region" description="HMG box" evidence="2">
    <location>
        <begin position="28"/>
        <end position="96"/>
    </location>
</feature>
<feature type="region of interest" description="Disordered" evidence="3">
    <location>
        <begin position="1"/>
        <end position="32"/>
    </location>
</feature>
<feature type="region of interest" description="Disordered" evidence="3">
    <location>
        <begin position="68"/>
        <end position="116"/>
    </location>
</feature>
<feature type="compositionally biased region" description="Basic and acidic residues" evidence="3">
    <location>
        <begin position="1"/>
        <end position="27"/>
    </location>
</feature>
<feature type="compositionally biased region" description="Basic and acidic residues" evidence="3">
    <location>
        <begin position="68"/>
        <end position="109"/>
    </location>
</feature>
<sequence length="116" mass="13250">MPKVSTKDSKKSTASDAKKRTKKDPNKPKRALSAYMFFVQDYRERIKTENPEATFGDVGKLLGIKWREMNENEKKPYEAKAKADKERADRENADYKAEGKASKKAAKADEESDDDE</sequence>